<comment type="function">
    <text evidence="1">Single strand-specific metallo-endoribonuclease involved in late-stage 70S ribosome quality control and in maturation of the 3' terminus of the 16S rRNA.</text>
</comment>
<comment type="cofactor">
    <cofactor evidence="1">
        <name>Zn(2+)</name>
        <dbReference type="ChEBI" id="CHEBI:29105"/>
    </cofactor>
    <text evidence="1">Binds 1 zinc ion.</text>
</comment>
<comment type="subcellular location">
    <subcellularLocation>
        <location evidence="1">Cytoplasm</location>
    </subcellularLocation>
</comment>
<comment type="similarity">
    <text evidence="1">Belongs to the endoribonuclease YbeY family.</text>
</comment>
<proteinExistence type="inferred from homology"/>
<keyword id="KW-0963">Cytoplasm</keyword>
<keyword id="KW-0255">Endonuclease</keyword>
<keyword id="KW-0378">Hydrolase</keyword>
<keyword id="KW-0479">Metal-binding</keyword>
<keyword id="KW-0540">Nuclease</keyword>
<keyword id="KW-0690">Ribosome biogenesis</keyword>
<keyword id="KW-0698">rRNA processing</keyword>
<keyword id="KW-0862">Zinc</keyword>
<sequence length="155" mass="17526">MSQVILDLQLACEDNSGLPEESQFQTWLNAVIPQFQEESEVTIRVVDTAESHSLNLTYRGKDKPTNVLSFPFEVPPGMEMSLLGDLVICRQVVEKEAQEQGKPLEAHWAHMVVHGSLHLLGYDHIEDDEAEEMEALETEIMLALGYEDPYIAEKE</sequence>
<evidence type="ECO:0000255" key="1">
    <source>
        <dbReference type="HAMAP-Rule" id="MF_00009"/>
    </source>
</evidence>
<organism>
    <name type="scientific">Shigella flexneri serotype 5b (strain 8401)</name>
    <dbReference type="NCBI Taxonomy" id="373384"/>
    <lineage>
        <taxon>Bacteria</taxon>
        <taxon>Pseudomonadati</taxon>
        <taxon>Pseudomonadota</taxon>
        <taxon>Gammaproteobacteria</taxon>
        <taxon>Enterobacterales</taxon>
        <taxon>Enterobacteriaceae</taxon>
        <taxon>Shigella</taxon>
    </lineage>
</organism>
<protein>
    <recommendedName>
        <fullName evidence="1">Endoribonuclease YbeY</fullName>
        <ecNumber evidence="1">3.1.-.-</ecNumber>
    </recommendedName>
</protein>
<accession>Q0T6R8</accession>
<dbReference type="EC" id="3.1.-.-" evidence="1"/>
<dbReference type="EMBL" id="CP000266">
    <property type="protein sequence ID" value="ABF02908.1"/>
    <property type="molecule type" value="Genomic_DNA"/>
</dbReference>
<dbReference type="RefSeq" id="WP_000084469.1">
    <property type="nucleotide sequence ID" value="NC_008258.1"/>
</dbReference>
<dbReference type="SMR" id="Q0T6R8"/>
<dbReference type="GeneID" id="93776823"/>
<dbReference type="KEGG" id="sfv:SFV_0668"/>
<dbReference type="HOGENOM" id="CLU_106710_0_1_6"/>
<dbReference type="Proteomes" id="UP000000659">
    <property type="component" value="Chromosome"/>
</dbReference>
<dbReference type="GO" id="GO:0005737">
    <property type="term" value="C:cytoplasm"/>
    <property type="evidence" value="ECO:0007669"/>
    <property type="project" value="UniProtKB-SubCell"/>
</dbReference>
<dbReference type="GO" id="GO:0004222">
    <property type="term" value="F:metalloendopeptidase activity"/>
    <property type="evidence" value="ECO:0007669"/>
    <property type="project" value="InterPro"/>
</dbReference>
<dbReference type="GO" id="GO:0004521">
    <property type="term" value="F:RNA endonuclease activity"/>
    <property type="evidence" value="ECO:0007669"/>
    <property type="project" value="UniProtKB-UniRule"/>
</dbReference>
<dbReference type="GO" id="GO:0008270">
    <property type="term" value="F:zinc ion binding"/>
    <property type="evidence" value="ECO:0007669"/>
    <property type="project" value="UniProtKB-UniRule"/>
</dbReference>
<dbReference type="GO" id="GO:0006364">
    <property type="term" value="P:rRNA processing"/>
    <property type="evidence" value="ECO:0007669"/>
    <property type="project" value="UniProtKB-UniRule"/>
</dbReference>
<dbReference type="FunFam" id="3.40.390.30:FF:000001">
    <property type="entry name" value="Endoribonuclease YbeY"/>
    <property type="match status" value="1"/>
</dbReference>
<dbReference type="Gene3D" id="3.40.390.30">
    <property type="entry name" value="Metalloproteases ('zincins'), catalytic domain"/>
    <property type="match status" value="1"/>
</dbReference>
<dbReference type="HAMAP" id="MF_00009">
    <property type="entry name" value="Endoribonucl_YbeY"/>
    <property type="match status" value="1"/>
</dbReference>
<dbReference type="InterPro" id="IPR023091">
    <property type="entry name" value="MetalPrtase_cat_dom_sf_prd"/>
</dbReference>
<dbReference type="InterPro" id="IPR002036">
    <property type="entry name" value="YbeY"/>
</dbReference>
<dbReference type="InterPro" id="IPR020549">
    <property type="entry name" value="YbeY_CS"/>
</dbReference>
<dbReference type="NCBIfam" id="TIGR00043">
    <property type="entry name" value="rRNA maturation RNase YbeY"/>
    <property type="match status" value="1"/>
</dbReference>
<dbReference type="PANTHER" id="PTHR46986">
    <property type="entry name" value="ENDORIBONUCLEASE YBEY, CHLOROPLASTIC"/>
    <property type="match status" value="1"/>
</dbReference>
<dbReference type="PANTHER" id="PTHR46986:SF1">
    <property type="entry name" value="ENDORIBONUCLEASE YBEY, CHLOROPLASTIC"/>
    <property type="match status" value="1"/>
</dbReference>
<dbReference type="Pfam" id="PF02130">
    <property type="entry name" value="YbeY"/>
    <property type="match status" value="1"/>
</dbReference>
<dbReference type="SUPFAM" id="SSF55486">
    <property type="entry name" value="Metalloproteases ('zincins'), catalytic domain"/>
    <property type="match status" value="1"/>
</dbReference>
<dbReference type="PROSITE" id="PS01306">
    <property type="entry name" value="UPF0054"/>
    <property type="match status" value="1"/>
</dbReference>
<gene>
    <name evidence="1" type="primary">ybeY</name>
    <name type="ordered locus">SFV_0668</name>
</gene>
<feature type="chain" id="PRO_0000284312" description="Endoribonuclease YbeY">
    <location>
        <begin position="1"/>
        <end position="155"/>
    </location>
</feature>
<feature type="binding site" evidence="1">
    <location>
        <position position="114"/>
    </location>
    <ligand>
        <name>Zn(2+)</name>
        <dbReference type="ChEBI" id="CHEBI:29105"/>
        <note>catalytic</note>
    </ligand>
</feature>
<feature type="binding site" evidence="1">
    <location>
        <position position="118"/>
    </location>
    <ligand>
        <name>Zn(2+)</name>
        <dbReference type="ChEBI" id="CHEBI:29105"/>
        <note>catalytic</note>
    </ligand>
</feature>
<feature type="binding site" evidence="1">
    <location>
        <position position="124"/>
    </location>
    <ligand>
        <name>Zn(2+)</name>
        <dbReference type="ChEBI" id="CHEBI:29105"/>
        <note>catalytic</note>
    </ligand>
</feature>
<name>YBEY_SHIF8</name>
<reference key="1">
    <citation type="journal article" date="2006" name="BMC Genomics">
        <title>Complete genome sequence of Shigella flexneri 5b and comparison with Shigella flexneri 2a.</title>
        <authorList>
            <person name="Nie H."/>
            <person name="Yang F."/>
            <person name="Zhang X."/>
            <person name="Yang J."/>
            <person name="Chen L."/>
            <person name="Wang J."/>
            <person name="Xiong Z."/>
            <person name="Peng J."/>
            <person name="Sun L."/>
            <person name="Dong J."/>
            <person name="Xue Y."/>
            <person name="Xu X."/>
            <person name="Chen S."/>
            <person name="Yao Z."/>
            <person name="Shen Y."/>
            <person name="Jin Q."/>
        </authorList>
    </citation>
    <scope>NUCLEOTIDE SEQUENCE [LARGE SCALE GENOMIC DNA]</scope>
    <source>
        <strain>8401</strain>
    </source>
</reference>